<reference key="1">
    <citation type="journal article" date="2006" name="J. Bacteriol.">
        <title>Comparison of the genome sequence of the poultry pathogen Bordetella avium with those of B. bronchiseptica, B. pertussis, and B. parapertussis reveals extensive diversity in surface structures associated with host interaction.</title>
        <authorList>
            <person name="Sebaihia M."/>
            <person name="Preston A."/>
            <person name="Maskell D.J."/>
            <person name="Kuzmiak H."/>
            <person name="Connell T.D."/>
            <person name="King N.D."/>
            <person name="Orndorff P.E."/>
            <person name="Miyamoto D.M."/>
            <person name="Thomson N.R."/>
            <person name="Harris D."/>
            <person name="Goble A."/>
            <person name="Lord A."/>
            <person name="Murphy L."/>
            <person name="Quail M.A."/>
            <person name="Rutter S."/>
            <person name="Squares R."/>
            <person name="Squares S."/>
            <person name="Woodward J."/>
            <person name="Parkhill J."/>
            <person name="Temple L.M."/>
        </authorList>
    </citation>
    <scope>NUCLEOTIDE SEQUENCE [LARGE SCALE GENOMIC DNA]</scope>
    <source>
        <strain>197N</strain>
    </source>
</reference>
<organism>
    <name type="scientific">Bordetella avium (strain 197N)</name>
    <dbReference type="NCBI Taxonomy" id="360910"/>
    <lineage>
        <taxon>Bacteria</taxon>
        <taxon>Pseudomonadati</taxon>
        <taxon>Pseudomonadota</taxon>
        <taxon>Betaproteobacteria</taxon>
        <taxon>Burkholderiales</taxon>
        <taxon>Alcaligenaceae</taxon>
        <taxon>Bordetella</taxon>
    </lineage>
</organism>
<evidence type="ECO:0000255" key="1">
    <source>
        <dbReference type="HAMAP-Rule" id="MF_01601"/>
    </source>
</evidence>
<name>HLDD_BORA1</name>
<gene>
    <name evidence="1" type="primary">hldD</name>
    <name type="ordered locus">BAV1359</name>
</gene>
<protein>
    <recommendedName>
        <fullName evidence="1">ADP-L-glycero-D-manno-heptose-6-epimerase</fullName>
        <ecNumber evidence="1">5.1.3.20</ecNumber>
    </recommendedName>
    <alternativeName>
        <fullName evidence="1">ADP-L-glycero-beta-D-manno-heptose-6-epimerase</fullName>
        <shortName evidence="1">ADP-glyceromanno-heptose 6-epimerase</shortName>
        <shortName evidence="1">ADP-hep 6-epimerase</shortName>
        <shortName evidence="1">AGME</shortName>
    </alternativeName>
</protein>
<accession>Q2L2R8</accession>
<feature type="chain" id="PRO_0000255719" description="ADP-L-glycero-D-manno-heptose-6-epimerase">
    <location>
        <begin position="1"/>
        <end position="332"/>
    </location>
</feature>
<feature type="active site" description="Proton acceptor" evidence="1">
    <location>
        <position position="138"/>
    </location>
</feature>
<feature type="active site" description="Proton acceptor" evidence="1">
    <location>
        <position position="176"/>
    </location>
</feature>
<feature type="binding site" evidence="1">
    <location>
        <begin position="10"/>
        <end position="11"/>
    </location>
    <ligand>
        <name>NADP(+)</name>
        <dbReference type="ChEBI" id="CHEBI:58349"/>
    </ligand>
</feature>
<feature type="binding site" evidence="1">
    <location>
        <begin position="31"/>
        <end position="32"/>
    </location>
    <ligand>
        <name>NADP(+)</name>
        <dbReference type="ChEBI" id="CHEBI:58349"/>
    </ligand>
</feature>
<feature type="binding site" evidence="1">
    <location>
        <position position="38"/>
    </location>
    <ligand>
        <name>NADP(+)</name>
        <dbReference type="ChEBI" id="CHEBI:58349"/>
    </ligand>
</feature>
<feature type="binding site" evidence="1">
    <location>
        <begin position="74"/>
        <end position="78"/>
    </location>
    <ligand>
        <name>NADP(+)</name>
        <dbReference type="ChEBI" id="CHEBI:58349"/>
    </ligand>
</feature>
<feature type="binding site" evidence="1">
    <location>
        <position position="91"/>
    </location>
    <ligand>
        <name>NADP(+)</name>
        <dbReference type="ChEBI" id="CHEBI:58349"/>
    </ligand>
</feature>
<feature type="binding site" evidence="1">
    <location>
        <position position="142"/>
    </location>
    <ligand>
        <name>NADP(+)</name>
        <dbReference type="ChEBI" id="CHEBI:58349"/>
    </ligand>
</feature>
<feature type="binding site" evidence="1">
    <location>
        <position position="167"/>
    </location>
    <ligand>
        <name>substrate</name>
    </ligand>
</feature>
<feature type="binding site" evidence="1">
    <location>
        <position position="168"/>
    </location>
    <ligand>
        <name>NADP(+)</name>
        <dbReference type="ChEBI" id="CHEBI:58349"/>
    </ligand>
</feature>
<feature type="binding site" evidence="1">
    <location>
        <position position="176"/>
    </location>
    <ligand>
        <name>NADP(+)</name>
        <dbReference type="ChEBI" id="CHEBI:58349"/>
    </ligand>
</feature>
<feature type="binding site" evidence="1">
    <location>
        <position position="178"/>
    </location>
    <ligand>
        <name>substrate</name>
    </ligand>
</feature>
<feature type="binding site" evidence="1">
    <location>
        <position position="185"/>
    </location>
    <ligand>
        <name>substrate</name>
    </ligand>
</feature>
<feature type="binding site" evidence="1">
    <location>
        <begin position="199"/>
        <end position="202"/>
    </location>
    <ligand>
        <name>substrate</name>
    </ligand>
</feature>
<feature type="binding site" evidence="1">
    <location>
        <position position="212"/>
    </location>
    <ligand>
        <name>substrate</name>
    </ligand>
</feature>
<feature type="binding site" evidence="1">
    <location>
        <position position="291"/>
    </location>
    <ligand>
        <name>substrate</name>
    </ligand>
</feature>
<sequence>MIVVTGAAGFIGSNLVRGLNRRGIYDIIAIDDLTEGDKFRNLVDCRIADYMHHEDARALLKAGQFPRVRAVLHQGACSDTTERNGQYMMDNNYRVTLEWFEYCQANRVPLIYASSAAVYGASTVYVEDPANEGPLNVYGYSKLLFDQVLRTRMDKLTAQVVGLRYFNVYGPHEQHKGRMASVAFHNMNQFLAEGHVRLFSGWDGYADGGQSRDFISVEDVVDVNLHFLDHPGTSGIFNCGTGRAQPFNDVAAAVVNTLRAEQGEAPLSLDELVSQGLIRYIPFPDDLKGRYQSFTQANVDALRAAGYTAVMRDVQTGVSEYVRYWRSRKSLA</sequence>
<keyword id="KW-0119">Carbohydrate metabolism</keyword>
<keyword id="KW-0413">Isomerase</keyword>
<keyword id="KW-0521">NADP</keyword>
<keyword id="KW-1185">Reference proteome</keyword>
<dbReference type="EC" id="5.1.3.20" evidence="1"/>
<dbReference type="EMBL" id="AM167904">
    <property type="protein sequence ID" value="CAJ48968.1"/>
    <property type="molecule type" value="Genomic_DNA"/>
</dbReference>
<dbReference type="RefSeq" id="WP_012417040.1">
    <property type="nucleotide sequence ID" value="NC_010645.1"/>
</dbReference>
<dbReference type="SMR" id="Q2L2R8"/>
<dbReference type="STRING" id="360910.BAV1359"/>
<dbReference type="GeneID" id="92935515"/>
<dbReference type="KEGG" id="bav:BAV1359"/>
<dbReference type="eggNOG" id="COG0451">
    <property type="taxonomic scope" value="Bacteria"/>
</dbReference>
<dbReference type="HOGENOM" id="CLU_007383_1_3_4"/>
<dbReference type="OrthoDB" id="9803010at2"/>
<dbReference type="UniPathway" id="UPA00356">
    <property type="reaction ID" value="UER00440"/>
</dbReference>
<dbReference type="Proteomes" id="UP000001977">
    <property type="component" value="Chromosome"/>
</dbReference>
<dbReference type="GO" id="GO:0008712">
    <property type="term" value="F:ADP-glyceromanno-heptose 6-epimerase activity"/>
    <property type="evidence" value="ECO:0007669"/>
    <property type="project" value="UniProtKB-UniRule"/>
</dbReference>
<dbReference type="GO" id="GO:0050661">
    <property type="term" value="F:NADP binding"/>
    <property type="evidence" value="ECO:0007669"/>
    <property type="project" value="InterPro"/>
</dbReference>
<dbReference type="GO" id="GO:0097171">
    <property type="term" value="P:ADP-L-glycero-beta-D-manno-heptose biosynthetic process"/>
    <property type="evidence" value="ECO:0007669"/>
    <property type="project" value="UniProtKB-UniPathway"/>
</dbReference>
<dbReference type="GO" id="GO:0005975">
    <property type="term" value="P:carbohydrate metabolic process"/>
    <property type="evidence" value="ECO:0007669"/>
    <property type="project" value="UniProtKB-UniRule"/>
</dbReference>
<dbReference type="CDD" id="cd05248">
    <property type="entry name" value="ADP_GME_SDR_e"/>
    <property type="match status" value="1"/>
</dbReference>
<dbReference type="Gene3D" id="3.40.50.720">
    <property type="entry name" value="NAD(P)-binding Rossmann-like Domain"/>
    <property type="match status" value="1"/>
</dbReference>
<dbReference type="Gene3D" id="3.90.25.10">
    <property type="entry name" value="UDP-galactose 4-epimerase, domain 1"/>
    <property type="match status" value="1"/>
</dbReference>
<dbReference type="HAMAP" id="MF_01601">
    <property type="entry name" value="Heptose_epimerase"/>
    <property type="match status" value="1"/>
</dbReference>
<dbReference type="InterPro" id="IPR001509">
    <property type="entry name" value="Epimerase_deHydtase"/>
</dbReference>
<dbReference type="InterPro" id="IPR011912">
    <property type="entry name" value="Heptose_epim"/>
</dbReference>
<dbReference type="InterPro" id="IPR036291">
    <property type="entry name" value="NAD(P)-bd_dom_sf"/>
</dbReference>
<dbReference type="NCBIfam" id="TIGR02197">
    <property type="entry name" value="heptose_epim"/>
    <property type="match status" value="1"/>
</dbReference>
<dbReference type="PANTHER" id="PTHR43103:SF3">
    <property type="entry name" value="ADP-L-GLYCERO-D-MANNO-HEPTOSE-6-EPIMERASE"/>
    <property type="match status" value="1"/>
</dbReference>
<dbReference type="PANTHER" id="PTHR43103">
    <property type="entry name" value="NUCLEOSIDE-DIPHOSPHATE-SUGAR EPIMERASE"/>
    <property type="match status" value="1"/>
</dbReference>
<dbReference type="Pfam" id="PF01370">
    <property type="entry name" value="Epimerase"/>
    <property type="match status" value="1"/>
</dbReference>
<dbReference type="SUPFAM" id="SSF51735">
    <property type="entry name" value="NAD(P)-binding Rossmann-fold domains"/>
    <property type="match status" value="1"/>
</dbReference>
<comment type="function">
    <text evidence="1">Catalyzes the interconversion between ADP-D-glycero-beta-D-manno-heptose and ADP-L-glycero-beta-D-manno-heptose via an epimerization at carbon 6 of the heptose.</text>
</comment>
<comment type="catalytic activity">
    <reaction evidence="1">
        <text>ADP-D-glycero-beta-D-manno-heptose = ADP-L-glycero-beta-D-manno-heptose</text>
        <dbReference type="Rhea" id="RHEA:17577"/>
        <dbReference type="ChEBI" id="CHEBI:59967"/>
        <dbReference type="ChEBI" id="CHEBI:61506"/>
        <dbReference type="EC" id="5.1.3.20"/>
    </reaction>
</comment>
<comment type="cofactor">
    <cofactor evidence="1">
        <name>NADP(+)</name>
        <dbReference type="ChEBI" id="CHEBI:58349"/>
    </cofactor>
    <text evidence="1">Binds 1 NADP(+) per subunit.</text>
</comment>
<comment type="pathway">
    <text evidence="1">Nucleotide-sugar biosynthesis; ADP-L-glycero-beta-D-manno-heptose biosynthesis; ADP-L-glycero-beta-D-manno-heptose from D-glycero-beta-D-manno-heptose 7-phosphate: step 4/4.</text>
</comment>
<comment type="subunit">
    <text evidence="1">Homopentamer.</text>
</comment>
<comment type="domain">
    <text evidence="1">Contains a large N-terminal NADP-binding domain, and a smaller C-terminal substrate-binding domain.</text>
</comment>
<comment type="similarity">
    <text evidence="1">Belongs to the NAD(P)-dependent epimerase/dehydratase family. HldD subfamily.</text>
</comment>
<proteinExistence type="inferred from homology"/>